<accession>A1RS16</accession>
<organism>
    <name type="scientific">Pyrobaculum islandicum (strain DSM 4184 / JCM 9189 / GEO3)</name>
    <dbReference type="NCBI Taxonomy" id="384616"/>
    <lineage>
        <taxon>Archaea</taxon>
        <taxon>Thermoproteota</taxon>
        <taxon>Thermoprotei</taxon>
        <taxon>Thermoproteales</taxon>
        <taxon>Thermoproteaceae</taxon>
        <taxon>Pyrobaculum</taxon>
    </lineage>
</organism>
<proteinExistence type="inferred from homology"/>
<reference key="1">
    <citation type="submission" date="2006-12" db="EMBL/GenBank/DDBJ databases">
        <title>Complete sequence of Pyrobaculum islandicum DSM 4184.</title>
        <authorList>
            <person name="Copeland A."/>
            <person name="Lucas S."/>
            <person name="Lapidus A."/>
            <person name="Barry K."/>
            <person name="Detter J.C."/>
            <person name="Glavina del Rio T."/>
            <person name="Dalin E."/>
            <person name="Tice H."/>
            <person name="Pitluck S."/>
            <person name="Meincke L."/>
            <person name="Brettin T."/>
            <person name="Bruce D."/>
            <person name="Han C."/>
            <person name="Tapia R."/>
            <person name="Gilna P."/>
            <person name="Schmutz J."/>
            <person name="Larimer F."/>
            <person name="Land M."/>
            <person name="Hauser L."/>
            <person name="Kyrpides N."/>
            <person name="Mikhailova N."/>
            <person name="Cozen A.E."/>
            <person name="Fitz-Gibbon S.T."/>
            <person name="House C.H."/>
            <person name="Saltikov C."/>
            <person name="Lowe T."/>
            <person name="Richardson P."/>
        </authorList>
    </citation>
    <scope>NUCLEOTIDE SEQUENCE [LARGE SCALE GENOMIC DNA]</scope>
    <source>
        <strain>DSM 4184 / JCM 9189 / GEO3</strain>
    </source>
</reference>
<evidence type="ECO:0000255" key="1">
    <source>
        <dbReference type="HAMAP-Rule" id="MF_01264"/>
    </source>
</evidence>
<gene>
    <name evidence="1" type="primary">cca</name>
    <name type="ordered locus">Pisl_0570</name>
</gene>
<sequence>MSTLEEVLREAYKLVTPSEEEERELKKVTEKVKALIADAINKYGIEAEIGVYGSSARSTWLPGQRDIDIFIVLTNRNINIKDVITLLSRYFSERGVTWSMRYAQHPYLSLLVDGYEVDVVPCYKISFGERPITAADRTPLHHKFLVEKLSEEQRRDVRLLKLFMKTIGVYGAEIKVEGFSGYLTELLVAYYGSFIDVLKAASRWRPYRTYITFSESRAKFKAPLVVVDPVDPERNVAAAVSLTSMSTFILASRRFLKNPSITYFQQRQGAVIKTNVVEVVFPYPNEPPDIVWGRYKRIGRSVFNWLKQCGFRVYRWGVESDEKSYVSLIYVVEQIELPPYMLHRGPPVYDGAVDAFVEKYLDKDIIGPFVQGSRVYVIKRRRYTNISDCLKTYLGKGDYTIRINLYEGALVRKNAWIT</sequence>
<dbReference type="EC" id="2.7.7.72" evidence="1"/>
<dbReference type="EMBL" id="CP000504">
    <property type="protein sequence ID" value="ABL87748.1"/>
    <property type="molecule type" value="Genomic_DNA"/>
</dbReference>
<dbReference type="RefSeq" id="WP_011762324.1">
    <property type="nucleotide sequence ID" value="NC_008701.1"/>
</dbReference>
<dbReference type="SMR" id="A1RS16"/>
<dbReference type="STRING" id="384616.Pisl_0570"/>
<dbReference type="GeneID" id="4617547"/>
<dbReference type="KEGG" id="pis:Pisl_0570"/>
<dbReference type="eggNOG" id="arCOG04249">
    <property type="taxonomic scope" value="Archaea"/>
</dbReference>
<dbReference type="HOGENOM" id="CLU_044679_1_0_2"/>
<dbReference type="OrthoDB" id="7378at2157"/>
<dbReference type="Proteomes" id="UP000002595">
    <property type="component" value="Chromosome"/>
</dbReference>
<dbReference type="GO" id="GO:0005524">
    <property type="term" value="F:ATP binding"/>
    <property type="evidence" value="ECO:0007669"/>
    <property type="project" value="UniProtKB-UniRule"/>
</dbReference>
<dbReference type="GO" id="GO:0004810">
    <property type="term" value="F:CCA tRNA nucleotidyltransferase activity"/>
    <property type="evidence" value="ECO:0007669"/>
    <property type="project" value="UniProtKB-UniRule"/>
</dbReference>
<dbReference type="GO" id="GO:0000287">
    <property type="term" value="F:magnesium ion binding"/>
    <property type="evidence" value="ECO:0007669"/>
    <property type="project" value="UniProtKB-UniRule"/>
</dbReference>
<dbReference type="GO" id="GO:0000049">
    <property type="term" value="F:tRNA binding"/>
    <property type="evidence" value="ECO:0007669"/>
    <property type="project" value="UniProtKB-UniRule"/>
</dbReference>
<dbReference type="GO" id="GO:0042245">
    <property type="term" value="P:RNA repair"/>
    <property type="evidence" value="ECO:0007669"/>
    <property type="project" value="UniProtKB-KW"/>
</dbReference>
<dbReference type="GO" id="GO:0001680">
    <property type="term" value="P:tRNA 3'-terminal CCA addition"/>
    <property type="evidence" value="ECO:0007669"/>
    <property type="project" value="UniProtKB-UniRule"/>
</dbReference>
<dbReference type="CDD" id="cd05400">
    <property type="entry name" value="NT_2-5OAS_ClassI-CCAase"/>
    <property type="match status" value="1"/>
</dbReference>
<dbReference type="Gene3D" id="3.30.460.10">
    <property type="entry name" value="Beta Polymerase, domain 2"/>
    <property type="match status" value="1"/>
</dbReference>
<dbReference type="Gene3D" id="1.10.1410.30">
    <property type="entry name" value="CCA tRNA nucleotidyltransferase, domain 2"/>
    <property type="match status" value="1"/>
</dbReference>
<dbReference type="Gene3D" id="3.30.70.590">
    <property type="entry name" value="Poly(A) polymerase predicted RNA binding domain"/>
    <property type="match status" value="1"/>
</dbReference>
<dbReference type="HAMAP" id="MF_01264">
    <property type="entry name" value="CCA_arch"/>
    <property type="match status" value="1"/>
</dbReference>
<dbReference type="InterPro" id="IPR048833">
    <property type="entry name" value="CAA_C"/>
</dbReference>
<dbReference type="InterPro" id="IPR008229">
    <property type="entry name" value="CCA-adding_arc"/>
</dbReference>
<dbReference type="InterPro" id="IPR042090">
    <property type="entry name" value="CCA_tRNA_nucleotrans_2"/>
</dbReference>
<dbReference type="InterPro" id="IPR006116">
    <property type="entry name" value="NT_2-5OAS_ClassI-CCAase"/>
</dbReference>
<dbReference type="InterPro" id="IPR043519">
    <property type="entry name" value="NT_sf"/>
</dbReference>
<dbReference type="InterPro" id="IPR011068">
    <property type="entry name" value="NuclTrfase_I-like_C"/>
</dbReference>
<dbReference type="InterPro" id="IPR002934">
    <property type="entry name" value="Polymerase_NTP_transf_dom"/>
</dbReference>
<dbReference type="InterPro" id="IPR015329">
    <property type="entry name" value="tRNA_NucTransf2"/>
</dbReference>
<dbReference type="NCBIfam" id="TIGR03671">
    <property type="entry name" value="cca_archaeal"/>
    <property type="match status" value="1"/>
</dbReference>
<dbReference type="PANTHER" id="PTHR39643">
    <property type="entry name" value="CCA-ADDING ENZYME"/>
    <property type="match status" value="1"/>
</dbReference>
<dbReference type="PANTHER" id="PTHR39643:SF1">
    <property type="entry name" value="CCA-ADDING ENZYME"/>
    <property type="match status" value="1"/>
</dbReference>
<dbReference type="Pfam" id="PF21133">
    <property type="entry name" value="CAA_C"/>
    <property type="match status" value="1"/>
</dbReference>
<dbReference type="Pfam" id="PF01909">
    <property type="entry name" value="NTP_transf_2"/>
    <property type="match status" value="1"/>
</dbReference>
<dbReference type="Pfam" id="PF09249">
    <property type="entry name" value="tRNA_NucTransf2"/>
    <property type="match status" value="1"/>
</dbReference>
<dbReference type="PIRSF" id="PIRSF005335">
    <property type="entry name" value="CCA_arch"/>
    <property type="match status" value="1"/>
</dbReference>
<dbReference type="SUPFAM" id="SSF81301">
    <property type="entry name" value="Nucleotidyltransferase"/>
    <property type="match status" value="1"/>
</dbReference>
<dbReference type="SUPFAM" id="SSF55003">
    <property type="entry name" value="PAP/Archaeal CCA-adding enzyme, C-terminal domain"/>
    <property type="match status" value="1"/>
</dbReference>
<dbReference type="SUPFAM" id="SSF81631">
    <property type="entry name" value="PAP/OAS1 substrate-binding domain"/>
    <property type="match status" value="1"/>
</dbReference>
<keyword id="KW-0067">ATP-binding</keyword>
<keyword id="KW-0460">Magnesium</keyword>
<keyword id="KW-0479">Metal-binding</keyword>
<keyword id="KW-0547">Nucleotide-binding</keyword>
<keyword id="KW-0548">Nucleotidyltransferase</keyword>
<keyword id="KW-0692">RNA repair</keyword>
<keyword id="KW-0694">RNA-binding</keyword>
<keyword id="KW-0808">Transferase</keyword>
<keyword id="KW-0819">tRNA processing</keyword>
<protein>
    <recommendedName>
        <fullName evidence="1">CCA-adding enzyme</fullName>
        <ecNumber evidence="1">2.7.7.72</ecNumber>
    </recommendedName>
    <alternativeName>
        <fullName evidence="1">CCA tRNA nucleotidyltransferase</fullName>
    </alternativeName>
    <alternativeName>
        <fullName evidence="1">tRNA CCA-pyrophosphorylase</fullName>
    </alternativeName>
    <alternativeName>
        <fullName evidence="1">tRNA adenylyl-/cytidylyl- transferase</fullName>
    </alternativeName>
    <alternativeName>
        <fullName evidence="1">tRNA nucleotidyltransferase</fullName>
    </alternativeName>
    <alternativeName>
        <fullName evidence="1">tRNA-NT</fullName>
    </alternativeName>
</protein>
<name>CCA_PYRIL</name>
<comment type="function">
    <text evidence="1">Catalyzes the addition and repair of the essential 3'-terminal CCA sequence in tRNAs without using a nucleic acid template. Adds these three nucleotides in the order of C, C, and A to the tRNA nucleotide-73, using CTP and ATP as substrates and producing inorganic pyrophosphate. tRNA 3'-terminal CCA addition is required both for tRNA processing and repair. Also involved in tRNA surveillance by mediating tandem CCA addition to generate a CCACCA at the 3' terminus of unstable tRNAs. While stable tRNAs receive only 3'-terminal CCA, unstable tRNAs are marked with CCACCA and rapidly degraded.</text>
</comment>
<comment type="catalytic activity">
    <reaction evidence="1">
        <text>a tRNA precursor + 2 CTP + ATP = a tRNA with a 3' CCA end + 3 diphosphate</text>
        <dbReference type="Rhea" id="RHEA:14433"/>
        <dbReference type="Rhea" id="RHEA-COMP:10465"/>
        <dbReference type="Rhea" id="RHEA-COMP:10468"/>
        <dbReference type="ChEBI" id="CHEBI:30616"/>
        <dbReference type="ChEBI" id="CHEBI:33019"/>
        <dbReference type="ChEBI" id="CHEBI:37563"/>
        <dbReference type="ChEBI" id="CHEBI:74896"/>
        <dbReference type="ChEBI" id="CHEBI:83071"/>
        <dbReference type="EC" id="2.7.7.72"/>
    </reaction>
</comment>
<comment type="catalytic activity">
    <reaction evidence="1">
        <text>a tRNA with a 3' CCA end + 2 CTP + ATP = a tRNA with a 3' CCACCA end + 3 diphosphate</text>
        <dbReference type="Rhea" id="RHEA:76235"/>
        <dbReference type="Rhea" id="RHEA-COMP:10468"/>
        <dbReference type="Rhea" id="RHEA-COMP:18655"/>
        <dbReference type="ChEBI" id="CHEBI:30616"/>
        <dbReference type="ChEBI" id="CHEBI:33019"/>
        <dbReference type="ChEBI" id="CHEBI:37563"/>
        <dbReference type="ChEBI" id="CHEBI:83071"/>
        <dbReference type="ChEBI" id="CHEBI:195187"/>
    </reaction>
    <physiologicalReaction direction="left-to-right" evidence="1">
        <dbReference type="Rhea" id="RHEA:76236"/>
    </physiologicalReaction>
</comment>
<comment type="cofactor">
    <cofactor evidence="1">
        <name>Mg(2+)</name>
        <dbReference type="ChEBI" id="CHEBI:18420"/>
    </cofactor>
</comment>
<comment type="subunit">
    <text evidence="1">Homodimer.</text>
</comment>
<comment type="miscellaneous">
    <text evidence="1">A single active site specifically recognizes both ATP and CTP and is responsible for their addition.</text>
</comment>
<comment type="similarity">
    <text evidence="1">Belongs to the tRNA nucleotidyltransferase/poly(A) polymerase family. Archaeal CCA-adding enzyme subfamily.</text>
</comment>
<feature type="chain" id="PRO_1000054351" description="CCA-adding enzyme">
    <location>
        <begin position="1"/>
        <end position="418"/>
    </location>
</feature>
<feature type="binding site" evidence="1">
    <location>
        <position position="54"/>
    </location>
    <ligand>
        <name>ATP</name>
        <dbReference type="ChEBI" id="CHEBI:30616"/>
    </ligand>
</feature>
<feature type="binding site" evidence="1">
    <location>
        <position position="54"/>
    </location>
    <ligand>
        <name>CTP</name>
        <dbReference type="ChEBI" id="CHEBI:37563"/>
    </ligand>
</feature>
<feature type="binding site" evidence="1">
    <location>
        <position position="57"/>
    </location>
    <ligand>
        <name>ATP</name>
        <dbReference type="ChEBI" id="CHEBI:30616"/>
    </ligand>
</feature>
<feature type="binding site" evidence="1">
    <location>
        <position position="57"/>
    </location>
    <ligand>
        <name>CTP</name>
        <dbReference type="ChEBI" id="CHEBI:37563"/>
    </ligand>
</feature>
<feature type="binding site" evidence="1">
    <location>
        <position position="66"/>
    </location>
    <ligand>
        <name>Mg(2+)</name>
        <dbReference type="ChEBI" id="CHEBI:18420"/>
    </ligand>
</feature>
<feature type="binding site" evidence="1">
    <location>
        <position position="68"/>
    </location>
    <ligand>
        <name>Mg(2+)</name>
        <dbReference type="ChEBI" id="CHEBI:18420"/>
    </ligand>
</feature>
<feature type="binding site" evidence="1">
    <location>
        <position position="118"/>
    </location>
    <ligand>
        <name>Mg(2+)</name>
        <dbReference type="ChEBI" id="CHEBI:18420"/>
    </ligand>
</feature>
<feature type="binding site" evidence="1">
    <location>
        <position position="141"/>
    </location>
    <ligand>
        <name>ATP</name>
        <dbReference type="ChEBI" id="CHEBI:30616"/>
    </ligand>
</feature>
<feature type="binding site" evidence="1">
    <location>
        <position position="141"/>
    </location>
    <ligand>
        <name>CTP</name>
        <dbReference type="ChEBI" id="CHEBI:37563"/>
    </ligand>
</feature>
<feature type="binding site" evidence="1">
    <location>
        <position position="161"/>
    </location>
    <ligand>
        <name>ATP</name>
        <dbReference type="ChEBI" id="CHEBI:30616"/>
    </ligand>
</feature>
<feature type="binding site" evidence="1">
    <location>
        <position position="161"/>
    </location>
    <ligand>
        <name>CTP</name>
        <dbReference type="ChEBI" id="CHEBI:37563"/>
    </ligand>
</feature>
<feature type="binding site" evidence="1">
    <location>
        <position position="170"/>
    </location>
    <ligand>
        <name>ATP</name>
        <dbReference type="ChEBI" id="CHEBI:30616"/>
    </ligand>
</feature>
<feature type="binding site" evidence="1">
    <location>
        <position position="170"/>
    </location>
    <ligand>
        <name>CTP</name>
        <dbReference type="ChEBI" id="CHEBI:37563"/>
    </ligand>
</feature>